<evidence type="ECO:0000255" key="1">
    <source>
        <dbReference type="HAMAP-Rule" id="MF_00226"/>
    </source>
</evidence>
<comment type="similarity">
    <text evidence="1">Belongs to the CinA family.</text>
</comment>
<feature type="chain" id="PRO_1000118916" description="Putative competence-damage inducible protein">
    <location>
        <begin position="1"/>
        <end position="412"/>
    </location>
</feature>
<name>CINA_BACC7</name>
<proteinExistence type="inferred from homology"/>
<dbReference type="EMBL" id="CP001177">
    <property type="protein sequence ID" value="ACJ79813.1"/>
    <property type="molecule type" value="Genomic_DNA"/>
</dbReference>
<dbReference type="SMR" id="B7HLB5"/>
<dbReference type="KEGG" id="bcr:BCAH187_A3828"/>
<dbReference type="HOGENOM" id="CLU_030805_9_3_9"/>
<dbReference type="Proteomes" id="UP000002214">
    <property type="component" value="Chromosome"/>
</dbReference>
<dbReference type="CDD" id="cd00885">
    <property type="entry name" value="cinA"/>
    <property type="match status" value="1"/>
</dbReference>
<dbReference type="Gene3D" id="3.30.70.2860">
    <property type="match status" value="1"/>
</dbReference>
<dbReference type="Gene3D" id="3.90.950.20">
    <property type="entry name" value="CinA-like"/>
    <property type="match status" value="1"/>
</dbReference>
<dbReference type="Gene3D" id="3.40.980.10">
    <property type="entry name" value="MoaB/Mog-like domain"/>
    <property type="match status" value="1"/>
</dbReference>
<dbReference type="HAMAP" id="MF_00226_B">
    <property type="entry name" value="CinA_B"/>
    <property type="match status" value="1"/>
</dbReference>
<dbReference type="InterPro" id="IPR050101">
    <property type="entry name" value="CinA"/>
</dbReference>
<dbReference type="InterPro" id="IPR036653">
    <property type="entry name" value="CinA-like_C"/>
</dbReference>
<dbReference type="InterPro" id="IPR008136">
    <property type="entry name" value="CinA_C"/>
</dbReference>
<dbReference type="InterPro" id="IPR041424">
    <property type="entry name" value="CinA_KH"/>
</dbReference>
<dbReference type="InterPro" id="IPR008135">
    <property type="entry name" value="Competence-induced_CinA"/>
</dbReference>
<dbReference type="InterPro" id="IPR036425">
    <property type="entry name" value="MoaB/Mog-like_dom_sf"/>
</dbReference>
<dbReference type="InterPro" id="IPR001453">
    <property type="entry name" value="MoaB/Mog_dom"/>
</dbReference>
<dbReference type="NCBIfam" id="TIGR00200">
    <property type="entry name" value="cinA_nterm"/>
    <property type="match status" value="1"/>
</dbReference>
<dbReference type="NCBIfam" id="TIGR00177">
    <property type="entry name" value="molyb_syn"/>
    <property type="match status" value="1"/>
</dbReference>
<dbReference type="NCBIfam" id="TIGR00199">
    <property type="entry name" value="PncC_domain"/>
    <property type="match status" value="1"/>
</dbReference>
<dbReference type="NCBIfam" id="NF001813">
    <property type="entry name" value="PRK00549.1"/>
    <property type="match status" value="1"/>
</dbReference>
<dbReference type="PANTHER" id="PTHR13939">
    <property type="entry name" value="NICOTINAMIDE-NUCLEOTIDE AMIDOHYDROLASE PNCC"/>
    <property type="match status" value="1"/>
</dbReference>
<dbReference type="PANTHER" id="PTHR13939:SF0">
    <property type="entry name" value="NMN AMIDOHYDROLASE-LIKE PROTEIN YFAY"/>
    <property type="match status" value="1"/>
</dbReference>
<dbReference type="Pfam" id="PF02464">
    <property type="entry name" value="CinA"/>
    <property type="match status" value="1"/>
</dbReference>
<dbReference type="Pfam" id="PF18146">
    <property type="entry name" value="CinA_KH"/>
    <property type="match status" value="1"/>
</dbReference>
<dbReference type="Pfam" id="PF00994">
    <property type="entry name" value="MoCF_biosynth"/>
    <property type="match status" value="1"/>
</dbReference>
<dbReference type="PIRSF" id="PIRSF006728">
    <property type="entry name" value="CinA"/>
    <property type="match status" value="1"/>
</dbReference>
<dbReference type="SMART" id="SM00852">
    <property type="entry name" value="MoCF_biosynth"/>
    <property type="match status" value="1"/>
</dbReference>
<dbReference type="SUPFAM" id="SSF142433">
    <property type="entry name" value="CinA-like"/>
    <property type="match status" value="1"/>
</dbReference>
<dbReference type="SUPFAM" id="SSF53218">
    <property type="entry name" value="Molybdenum cofactor biosynthesis proteins"/>
    <property type="match status" value="1"/>
</dbReference>
<reference key="1">
    <citation type="submission" date="2008-10" db="EMBL/GenBank/DDBJ databases">
        <title>Genome sequence of Bacillus cereus AH187.</title>
        <authorList>
            <person name="Dodson R.J."/>
            <person name="Durkin A.S."/>
            <person name="Rosovitz M.J."/>
            <person name="Rasko D.A."/>
            <person name="Kolsto A.B."/>
            <person name="Okstad O.A."/>
            <person name="Ravel J."/>
            <person name="Sutton G."/>
        </authorList>
    </citation>
    <scope>NUCLEOTIDE SEQUENCE [LARGE SCALE GENOMIC DNA]</scope>
    <source>
        <strain>AH187</strain>
    </source>
</reference>
<accession>B7HLB5</accession>
<sequence>MNAEIIAVGTELLLGQIANTNAQFLSEKLASIGINVYYHTVVGDNNKRLQQAIEVAEERADMLIFTGGLGPTKDDLTKETIASSLAEELVYDEKALASISDYFKRTGREFTENNKKQALVLDGATVFANDHGMAPGMGLNKNGKVYILLPGPPKEMKPMYVSYVEPFLRNFTTGENIYSRVLRFFGIGESQLEVKVQDLIDGQTNPTIAPLANDGEVTLRLTAKHQNVHEAEKLIQHVEDLILERVGEFFYGYDQEFLHYKAIELLKKKGLTLACAESLTGGLFGNQVTENAGVSSVFKGGVICYHNDVKQHVLHVPEEVLSTDGAVSKECARYLAENVRELLKADIGISFTGVAGPDASEHKEPGTVFVGLAIKDEPTVVFPLNLSGSRQQIRERSAKYGFYHLYKKLEEI</sequence>
<organism>
    <name type="scientific">Bacillus cereus (strain AH187)</name>
    <dbReference type="NCBI Taxonomy" id="405534"/>
    <lineage>
        <taxon>Bacteria</taxon>
        <taxon>Bacillati</taxon>
        <taxon>Bacillota</taxon>
        <taxon>Bacilli</taxon>
        <taxon>Bacillales</taxon>
        <taxon>Bacillaceae</taxon>
        <taxon>Bacillus</taxon>
        <taxon>Bacillus cereus group</taxon>
    </lineage>
</organism>
<gene>
    <name evidence="1" type="primary">cinA</name>
    <name type="ordered locus">BCAH187_A3828</name>
</gene>
<protein>
    <recommendedName>
        <fullName evidence="1">Putative competence-damage inducible protein</fullName>
    </recommendedName>
</protein>